<reference key="1">
    <citation type="submission" date="2007-09" db="EMBL/GenBank/DDBJ databases">
        <title>Complete sequence of chromosome of Serratia proteamaculans 568.</title>
        <authorList>
            <consortium name="US DOE Joint Genome Institute"/>
            <person name="Copeland A."/>
            <person name="Lucas S."/>
            <person name="Lapidus A."/>
            <person name="Barry K."/>
            <person name="Glavina del Rio T."/>
            <person name="Dalin E."/>
            <person name="Tice H."/>
            <person name="Pitluck S."/>
            <person name="Chain P."/>
            <person name="Malfatti S."/>
            <person name="Shin M."/>
            <person name="Vergez L."/>
            <person name="Schmutz J."/>
            <person name="Larimer F."/>
            <person name="Land M."/>
            <person name="Hauser L."/>
            <person name="Kyrpides N."/>
            <person name="Kim E."/>
            <person name="Taghavi S."/>
            <person name="Newman L."/>
            <person name="Vangronsveld J."/>
            <person name="van der Lelie D."/>
            <person name="Richardson P."/>
        </authorList>
    </citation>
    <scope>NUCLEOTIDE SEQUENCE [LARGE SCALE GENOMIC DNA]</scope>
    <source>
        <strain>568</strain>
    </source>
</reference>
<comment type="function">
    <text evidence="1">Specifically methylates the cytosine at position 1407 (m5C1407) of 16S rRNA.</text>
</comment>
<comment type="catalytic activity">
    <reaction evidence="1">
        <text>cytidine(1407) in 16S rRNA + S-adenosyl-L-methionine = 5-methylcytidine(1407) in 16S rRNA + S-adenosyl-L-homocysteine + H(+)</text>
        <dbReference type="Rhea" id="RHEA:42756"/>
        <dbReference type="Rhea" id="RHEA-COMP:10223"/>
        <dbReference type="Rhea" id="RHEA-COMP:10224"/>
        <dbReference type="ChEBI" id="CHEBI:15378"/>
        <dbReference type="ChEBI" id="CHEBI:57856"/>
        <dbReference type="ChEBI" id="CHEBI:59789"/>
        <dbReference type="ChEBI" id="CHEBI:74483"/>
        <dbReference type="ChEBI" id="CHEBI:82748"/>
        <dbReference type="EC" id="2.1.1.178"/>
    </reaction>
</comment>
<comment type="subcellular location">
    <subcellularLocation>
        <location evidence="1">Cytoplasm</location>
    </subcellularLocation>
</comment>
<comment type="similarity">
    <text evidence="1">Belongs to the class I-like SAM-binding methyltransferase superfamily. RsmB/NOP family.</text>
</comment>
<comment type="sequence caution" evidence="2">
    <conflict type="erroneous initiation">
        <sequence resource="EMBL-CDS" id="ABV41216"/>
    </conflict>
</comment>
<feature type="chain" id="PRO_0000382582" description="Ribosomal RNA small subunit methyltransferase F">
    <location>
        <begin position="1"/>
        <end position="478"/>
    </location>
</feature>
<feature type="active site" description="Nucleophile" evidence="1">
    <location>
        <position position="247"/>
    </location>
</feature>
<feature type="binding site" evidence="1">
    <location>
        <begin position="125"/>
        <end position="131"/>
    </location>
    <ligand>
        <name>S-adenosyl-L-methionine</name>
        <dbReference type="ChEBI" id="CHEBI:59789"/>
    </ligand>
</feature>
<feature type="binding site" evidence="1">
    <location>
        <position position="149"/>
    </location>
    <ligand>
        <name>S-adenosyl-L-methionine</name>
        <dbReference type="ChEBI" id="CHEBI:59789"/>
    </ligand>
</feature>
<feature type="binding site" evidence="1">
    <location>
        <position position="176"/>
    </location>
    <ligand>
        <name>S-adenosyl-L-methionine</name>
        <dbReference type="ChEBI" id="CHEBI:59789"/>
    </ligand>
</feature>
<feature type="binding site" evidence="1">
    <location>
        <position position="194"/>
    </location>
    <ligand>
        <name>S-adenosyl-L-methionine</name>
        <dbReference type="ChEBI" id="CHEBI:59789"/>
    </ligand>
</feature>
<sequence>MAKPACVFLPPAFLEATRAIMPADLSMDDFIAACQRPLRRSLRVNTLKISVTDFLTLVQDYDWRLEPIPWCAEGFWIERGDEELRLGSAAEHLSGLFYIQEASSMLPVSALFAGAEAPSRVLDVAAAPGSKTTQIAALMNNQGGIVANEYSASRVKVLHANISRCGVKNVALTHFDGRVFGAALPESFDAILLDAPCSGEGVVRKDPDAMSNWSPESVTAIADTQRELIDSAFHALAPGGVMVYSTCTLNAQENQQIVNGLLATYGDAVSIEPLGDLFPGAKQALTAEGFLHVFPQIYDSEGFFVARLRKHHSVPPLAKPSYKLGKFPFTPLSGKDSAEIAQAAAASGLAWDKTSRLWARDKEIWLFPAELEALVNKIRFSRIGLKLAERFTKGYRWQHEAVIALAVADGKQRFELDATLAQEWFHGRDLYPEPPPQTDECIVTYQQQPLGIAKRIGSRIKNNLPRELVRDGVLDFHQ</sequence>
<accession>A8GDM6</accession>
<protein>
    <recommendedName>
        <fullName evidence="1">Ribosomal RNA small subunit methyltransferase F</fullName>
        <ecNumber evidence="1">2.1.1.178</ecNumber>
    </recommendedName>
    <alternativeName>
        <fullName evidence="1">16S rRNA m5C1407 methyltransferase</fullName>
    </alternativeName>
    <alternativeName>
        <fullName evidence="1">rRNA (cytosine-C(5)-)-methyltransferase RsmF</fullName>
    </alternativeName>
</protein>
<proteinExistence type="inferred from homology"/>
<dbReference type="EC" id="2.1.1.178" evidence="1"/>
<dbReference type="EMBL" id="CP000826">
    <property type="protein sequence ID" value="ABV41216.1"/>
    <property type="status" value="ALT_INIT"/>
    <property type="molecule type" value="Genomic_DNA"/>
</dbReference>
<dbReference type="SMR" id="A8GDM6"/>
<dbReference type="STRING" id="399741.Spro_2113"/>
<dbReference type="KEGG" id="spe:Spro_2113"/>
<dbReference type="eggNOG" id="COG0144">
    <property type="taxonomic scope" value="Bacteria"/>
</dbReference>
<dbReference type="eggNOG" id="COG3270">
    <property type="taxonomic scope" value="Bacteria"/>
</dbReference>
<dbReference type="HOGENOM" id="CLU_005316_6_2_6"/>
<dbReference type="OrthoDB" id="9810297at2"/>
<dbReference type="GO" id="GO:0005737">
    <property type="term" value="C:cytoplasm"/>
    <property type="evidence" value="ECO:0007669"/>
    <property type="project" value="UniProtKB-SubCell"/>
</dbReference>
<dbReference type="GO" id="GO:0003723">
    <property type="term" value="F:RNA binding"/>
    <property type="evidence" value="ECO:0007669"/>
    <property type="project" value="UniProtKB-KW"/>
</dbReference>
<dbReference type="GO" id="GO:0009383">
    <property type="term" value="F:rRNA (cytosine-C5-)-methyltransferase activity"/>
    <property type="evidence" value="ECO:0007669"/>
    <property type="project" value="TreeGrafter"/>
</dbReference>
<dbReference type="GO" id="GO:0070475">
    <property type="term" value="P:rRNA base methylation"/>
    <property type="evidence" value="ECO:0007669"/>
    <property type="project" value="TreeGrafter"/>
</dbReference>
<dbReference type="CDD" id="cd02440">
    <property type="entry name" value="AdoMet_MTases"/>
    <property type="match status" value="1"/>
</dbReference>
<dbReference type="Gene3D" id="3.10.450.720">
    <property type="match status" value="1"/>
</dbReference>
<dbReference type="Gene3D" id="3.40.50.150">
    <property type="entry name" value="Vaccinia Virus protein VP39"/>
    <property type="match status" value="1"/>
</dbReference>
<dbReference type="HAMAP" id="MF_01579">
    <property type="entry name" value="16SrRNA_methyltr_F"/>
    <property type="match status" value="1"/>
</dbReference>
<dbReference type="InterPro" id="IPR031341">
    <property type="entry name" value="Methyltr_RsmF_N"/>
</dbReference>
<dbReference type="InterPro" id="IPR049560">
    <property type="entry name" value="MeTrfase_RsmB-F_NOP2_cat"/>
</dbReference>
<dbReference type="InterPro" id="IPR001678">
    <property type="entry name" value="MeTrfase_RsmB-F_NOP2_dom"/>
</dbReference>
<dbReference type="InterPro" id="IPR027391">
    <property type="entry name" value="Nol1_Nop2_Fmu_2"/>
</dbReference>
<dbReference type="InterPro" id="IPR011023">
    <property type="entry name" value="Nop2p"/>
</dbReference>
<dbReference type="InterPro" id="IPR023267">
    <property type="entry name" value="RCMT"/>
</dbReference>
<dbReference type="InterPro" id="IPR023545">
    <property type="entry name" value="rRNA_ssu_MeTfrase_F"/>
</dbReference>
<dbReference type="InterPro" id="IPR018314">
    <property type="entry name" value="RsmB/NOL1/NOP2-like_CS"/>
</dbReference>
<dbReference type="InterPro" id="IPR029063">
    <property type="entry name" value="SAM-dependent_MTases_sf"/>
</dbReference>
<dbReference type="InterPro" id="IPR048457">
    <property type="entry name" value="YebU_pre-PUA_dom"/>
</dbReference>
<dbReference type="NCBIfam" id="TIGR00446">
    <property type="entry name" value="nop2p"/>
    <property type="match status" value="1"/>
</dbReference>
<dbReference type="NCBIfam" id="NF008898">
    <property type="entry name" value="PRK11933.1"/>
    <property type="match status" value="1"/>
</dbReference>
<dbReference type="PANTHER" id="PTHR22807:SF30">
    <property type="entry name" value="28S RRNA (CYTOSINE(4447)-C(5))-METHYLTRANSFERASE-RELATED"/>
    <property type="match status" value="1"/>
</dbReference>
<dbReference type="PANTHER" id="PTHR22807">
    <property type="entry name" value="NOP2 YEAST -RELATED NOL1/NOP2/FMU SUN DOMAIN-CONTAINING"/>
    <property type="match status" value="1"/>
</dbReference>
<dbReference type="Pfam" id="PF01189">
    <property type="entry name" value="Methyltr_RsmB-F"/>
    <property type="match status" value="1"/>
</dbReference>
<dbReference type="Pfam" id="PF17125">
    <property type="entry name" value="Methyltr_RsmF_N"/>
    <property type="match status" value="1"/>
</dbReference>
<dbReference type="Pfam" id="PF13636">
    <property type="entry name" value="Methyltranf_PUA"/>
    <property type="match status" value="1"/>
</dbReference>
<dbReference type="Pfam" id="PF21150">
    <property type="entry name" value="YebU_pre-PUA_dom"/>
    <property type="match status" value="1"/>
</dbReference>
<dbReference type="PRINTS" id="PR02008">
    <property type="entry name" value="RCMTFAMILY"/>
</dbReference>
<dbReference type="SUPFAM" id="SSF53335">
    <property type="entry name" value="S-adenosyl-L-methionine-dependent methyltransferases"/>
    <property type="match status" value="1"/>
</dbReference>
<dbReference type="PROSITE" id="PS01153">
    <property type="entry name" value="NOL1_NOP2_SUN"/>
    <property type="match status" value="1"/>
</dbReference>
<dbReference type="PROSITE" id="PS51686">
    <property type="entry name" value="SAM_MT_RSMB_NOP"/>
    <property type="match status" value="1"/>
</dbReference>
<name>RSMF_SERP5</name>
<evidence type="ECO:0000255" key="1">
    <source>
        <dbReference type="HAMAP-Rule" id="MF_01579"/>
    </source>
</evidence>
<evidence type="ECO:0000305" key="2"/>
<organism>
    <name type="scientific">Serratia proteamaculans (strain 568)</name>
    <dbReference type="NCBI Taxonomy" id="399741"/>
    <lineage>
        <taxon>Bacteria</taxon>
        <taxon>Pseudomonadati</taxon>
        <taxon>Pseudomonadota</taxon>
        <taxon>Gammaproteobacteria</taxon>
        <taxon>Enterobacterales</taxon>
        <taxon>Yersiniaceae</taxon>
        <taxon>Serratia</taxon>
    </lineage>
</organism>
<keyword id="KW-0963">Cytoplasm</keyword>
<keyword id="KW-0489">Methyltransferase</keyword>
<keyword id="KW-0694">RNA-binding</keyword>
<keyword id="KW-0698">rRNA processing</keyword>
<keyword id="KW-0949">S-adenosyl-L-methionine</keyword>
<keyword id="KW-0808">Transferase</keyword>
<gene>
    <name evidence="1" type="primary">rsmF</name>
    <name type="ordered locus">Spro_2113</name>
</gene>